<feature type="signal peptide" evidence="1">
    <location>
        <begin position="1"/>
        <end position="22"/>
    </location>
</feature>
<feature type="chain" id="PRO_0000348122" description="Putative uncharacterized protein DDB_G0275685">
    <location>
        <begin position="23"/>
        <end position="49"/>
    </location>
</feature>
<organism>
    <name type="scientific">Dictyostelium discoideum</name>
    <name type="common">Social amoeba</name>
    <dbReference type="NCBI Taxonomy" id="44689"/>
    <lineage>
        <taxon>Eukaryota</taxon>
        <taxon>Amoebozoa</taxon>
        <taxon>Evosea</taxon>
        <taxon>Eumycetozoa</taxon>
        <taxon>Dictyostelia</taxon>
        <taxon>Dictyosteliales</taxon>
        <taxon>Dictyosteliaceae</taxon>
        <taxon>Dictyostelium</taxon>
    </lineage>
</organism>
<accession>Q86HC2</accession>
<accession>Q553C9</accession>
<sequence length="49" mass="5507">MKLNAFHLVVVVLIVSIFSVSSEDQTNGDIEYIDSNKISSYNDELCKDI</sequence>
<name>Y7269_DICDI</name>
<dbReference type="EMBL" id="AAFI02000013">
    <property type="protein sequence ID" value="EAL69593.1"/>
    <property type="molecule type" value="Genomic_DNA"/>
</dbReference>
<dbReference type="RefSeq" id="XP_643489.1">
    <property type="nucleotide sequence ID" value="XM_638397.1"/>
</dbReference>
<dbReference type="PaxDb" id="44689-DDB0167269"/>
<dbReference type="EnsemblProtists" id="EAL69593">
    <property type="protein sequence ID" value="EAL69593"/>
    <property type="gene ID" value="DDB_G0275685"/>
</dbReference>
<dbReference type="GeneID" id="8620070"/>
<dbReference type="KEGG" id="ddi:DDB_G0275685"/>
<dbReference type="dictyBase" id="DDB_G0275685"/>
<dbReference type="HOGENOM" id="CLU_3145610_0_0_1"/>
<dbReference type="InParanoid" id="Q86HC2"/>
<dbReference type="PRO" id="PR:Q86HC2"/>
<dbReference type="Proteomes" id="UP000002195">
    <property type="component" value="Chromosome 2"/>
</dbReference>
<dbReference type="GO" id="GO:0005576">
    <property type="term" value="C:extracellular region"/>
    <property type="evidence" value="ECO:0007669"/>
    <property type="project" value="UniProtKB-SubCell"/>
</dbReference>
<keyword id="KW-1185">Reference proteome</keyword>
<keyword id="KW-0964">Secreted</keyword>
<keyword id="KW-0732">Signal</keyword>
<comment type="subcellular location">
    <subcellularLocation>
        <location evidence="2">Secreted</location>
    </subcellularLocation>
</comment>
<reference key="1">
    <citation type="journal article" date="2002" name="Nature">
        <title>Sequence and analysis of chromosome 2 of Dictyostelium discoideum.</title>
        <authorList>
            <person name="Gloeckner G."/>
            <person name="Eichinger L."/>
            <person name="Szafranski K."/>
            <person name="Pachebat J.A."/>
            <person name="Bankier A.T."/>
            <person name="Dear P.H."/>
            <person name="Lehmann R."/>
            <person name="Baumgart C."/>
            <person name="Parra G."/>
            <person name="Abril J.F."/>
            <person name="Guigo R."/>
            <person name="Kumpf K."/>
            <person name="Tunggal B."/>
            <person name="Cox E.C."/>
            <person name="Quail M.A."/>
            <person name="Platzer M."/>
            <person name="Rosenthal A."/>
            <person name="Noegel A.A."/>
        </authorList>
    </citation>
    <scope>NUCLEOTIDE SEQUENCE [LARGE SCALE GENOMIC DNA]</scope>
    <source>
        <strain>AX4</strain>
    </source>
</reference>
<reference key="2">
    <citation type="journal article" date="2005" name="Nature">
        <title>The genome of the social amoeba Dictyostelium discoideum.</title>
        <authorList>
            <person name="Eichinger L."/>
            <person name="Pachebat J.A."/>
            <person name="Gloeckner G."/>
            <person name="Rajandream M.A."/>
            <person name="Sucgang R."/>
            <person name="Berriman M."/>
            <person name="Song J."/>
            <person name="Olsen R."/>
            <person name="Szafranski K."/>
            <person name="Xu Q."/>
            <person name="Tunggal B."/>
            <person name="Kummerfeld S."/>
            <person name="Madera M."/>
            <person name="Konfortov B.A."/>
            <person name="Rivero F."/>
            <person name="Bankier A.T."/>
            <person name="Lehmann R."/>
            <person name="Hamlin N."/>
            <person name="Davies R."/>
            <person name="Gaudet P."/>
            <person name="Fey P."/>
            <person name="Pilcher K."/>
            <person name="Chen G."/>
            <person name="Saunders D."/>
            <person name="Sodergren E.J."/>
            <person name="Davis P."/>
            <person name="Kerhornou A."/>
            <person name="Nie X."/>
            <person name="Hall N."/>
            <person name="Anjard C."/>
            <person name="Hemphill L."/>
            <person name="Bason N."/>
            <person name="Farbrother P."/>
            <person name="Desany B."/>
            <person name="Just E."/>
            <person name="Morio T."/>
            <person name="Rost R."/>
            <person name="Churcher C.M."/>
            <person name="Cooper J."/>
            <person name="Haydock S."/>
            <person name="van Driessche N."/>
            <person name="Cronin A."/>
            <person name="Goodhead I."/>
            <person name="Muzny D.M."/>
            <person name="Mourier T."/>
            <person name="Pain A."/>
            <person name="Lu M."/>
            <person name="Harper D."/>
            <person name="Lindsay R."/>
            <person name="Hauser H."/>
            <person name="James K.D."/>
            <person name="Quiles M."/>
            <person name="Madan Babu M."/>
            <person name="Saito T."/>
            <person name="Buchrieser C."/>
            <person name="Wardroper A."/>
            <person name="Felder M."/>
            <person name="Thangavelu M."/>
            <person name="Johnson D."/>
            <person name="Knights A."/>
            <person name="Loulseged H."/>
            <person name="Mungall K.L."/>
            <person name="Oliver K."/>
            <person name="Price C."/>
            <person name="Quail M.A."/>
            <person name="Urushihara H."/>
            <person name="Hernandez J."/>
            <person name="Rabbinowitsch E."/>
            <person name="Steffen D."/>
            <person name="Sanders M."/>
            <person name="Ma J."/>
            <person name="Kohara Y."/>
            <person name="Sharp S."/>
            <person name="Simmonds M.N."/>
            <person name="Spiegler S."/>
            <person name="Tivey A."/>
            <person name="Sugano S."/>
            <person name="White B."/>
            <person name="Walker D."/>
            <person name="Woodward J.R."/>
            <person name="Winckler T."/>
            <person name="Tanaka Y."/>
            <person name="Shaulsky G."/>
            <person name="Schleicher M."/>
            <person name="Weinstock G.M."/>
            <person name="Rosenthal A."/>
            <person name="Cox E.C."/>
            <person name="Chisholm R.L."/>
            <person name="Gibbs R.A."/>
            <person name="Loomis W.F."/>
            <person name="Platzer M."/>
            <person name="Kay R.R."/>
            <person name="Williams J.G."/>
            <person name="Dear P.H."/>
            <person name="Noegel A.A."/>
            <person name="Barrell B.G."/>
            <person name="Kuspa A."/>
        </authorList>
    </citation>
    <scope>NUCLEOTIDE SEQUENCE [LARGE SCALE GENOMIC DNA]</scope>
    <source>
        <strain>AX4</strain>
    </source>
</reference>
<proteinExistence type="inferred from homology"/>
<evidence type="ECO:0000255" key="1"/>
<evidence type="ECO:0000305" key="2"/>
<gene>
    <name type="ORF">DDB_G0275685</name>
</gene>
<protein>
    <recommendedName>
        <fullName>Putative uncharacterized protein DDB_G0275685</fullName>
    </recommendedName>
</protein>